<proteinExistence type="evidence at protein level"/>
<name>SYI1_STAAU</name>
<sequence>MDYKETLLMPKTDFPMRGGLPNKEPQIQEKWDAEDQYHKALEKNKGNETFILHDGPPYANGNLHMGHALNKILKDFIVRYKTMQGFYAPYVPGWDTHGLPIEQALTKKGVDRKKMSTAEFREKCKEFALEQIELQKKDFRRLGVRGDFNDPYITLKPEYEAAQIRIFGEMADKGLIYKGKKPVYWSPSSESSLAEAEIEYHDKRSASIYVAFNVKDDKGVVDADAKFIIWTTTPWTIPSNVAITVHPELKYGQYNVNGEKYIIAEALSDAVAEALDWDKASIKLEKEYTGKELEYVVAQHPFLDRESLVINGDHVTTDAGTGCVHTAPGHGEDDYIVGQKYELPVISPIDDKGVFTEEGGQFEGMFYDKANKAVTDLLTEKGALLKLDFITHSYPHDWRTKKPVIFRATPQWFASISKVRQDILDAIENTNFKVNWGKTRIYNMVRDRGEWVISRQRVWGVPLPVFYAENGEIIMTKETVNHVADLFAEHGSNIWFEREAKDLLPEGFTHPGSPNGTFTKETDIMDVWFDSGSSHRGVLETRPELSFPADMYLEGSDQYRGWFNSSITTSVATRGVSPYKFLLSHGFVMDGEGKKMSKSLGNVIVPDQVVKQKGADIARLWVSSTDYLADVRISDEILKQTSDVYRKIRNTLRFMLGNINDFNPDTDSIPESELLEVDRYLLNRLREFTASTINNYENFDYLNIYQEVQNFINVELSNFYLDYGKDILYIEQRDSHIRRSMQTVLYQILVDMTKLLAPILVHTAEEVWSHTPHVKEESVHLADMPKVVEVDQALLDKWRTFMNLRDDVNRALETARNEKVIGKSLEAKVTIASNDKFNASEFLTSFDALHQLFIVSQVKVVDKLDDQATAYEHGDIVIEHADGEKCERCWNYSEDLGAVDELTHLCPRCQQVVKSLV</sequence>
<reference key="1">
    <citation type="journal article" date="1994" name="Gene">
        <title>Analysis and toxic overexpression in Escherichia coli of a staphylococcal gene encoding isoleucyl-tRNA synthetase.</title>
        <authorList>
            <person name="Chalker A.F."/>
            <person name="Ward J.M."/>
            <person name="Fosberry A.P."/>
            <person name="Hodgson J.E."/>
        </authorList>
    </citation>
    <scope>NUCLEOTIDE SEQUENCE [GENOMIC DNA]</scope>
    <scope>PARTIAL PROTEIN SEQUENCE</scope>
    <source>
        <strain>ATCC 9144 / DSM 683 / NCIB 6571 / NCTC 6571 / NRRL B-314 / Oxford</strain>
    </source>
</reference>
<reference evidence="6 7 8" key="2">
    <citation type="journal article" date="1999" name="Science">
        <title>Insights into editing from an Ile-tRNA synthetase structure with tRNAIle and mupirocin.</title>
        <authorList>
            <person name="Silvian L.F."/>
            <person name="Wang J."/>
            <person name="Steitz T.A."/>
        </authorList>
    </citation>
    <scope>X-RAY CRYSTALLOGRAPHY (2.2 ANGSTROMS) IN COMPLEX WITH ZINC IONS; TRNA(ILE) AND MUPIROCIN</scope>
    <scope>COFACTOR</scope>
</reference>
<gene>
    <name type="primary">ileS</name>
</gene>
<accession>P41972</accession>
<organism>
    <name type="scientific">Staphylococcus aureus</name>
    <dbReference type="NCBI Taxonomy" id="1280"/>
    <lineage>
        <taxon>Bacteria</taxon>
        <taxon>Bacillati</taxon>
        <taxon>Bacillota</taxon>
        <taxon>Bacilli</taxon>
        <taxon>Bacillales</taxon>
        <taxon>Staphylococcaceae</taxon>
        <taxon>Staphylococcus</taxon>
    </lineage>
</organism>
<feature type="chain" id="PRO_0000098463" description="Isoleucine--tRNA ligase">
    <location>
        <begin position="1"/>
        <end position="917"/>
    </location>
</feature>
<feature type="short sequence motif" description="'HIGH' region">
    <location>
        <begin position="57"/>
        <end position="67"/>
    </location>
</feature>
<feature type="short sequence motif" description="'KMSKS' region">
    <location>
        <begin position="595"/>
        <end position="599"/>
    </location>
</feature>
<feature type="binding site" evidence="2">
    <location>
        <position position="56"/>
    </location>
    <ligand>
        <name>L-isoleucyl-5'-AMP</name>
        <dbReference type="ChEBI" id="CHEBI:178002"/>
    </ligand>
</feature>
<feature type="binding site" evidence="2">
    <location>
        <position position="67"/>
    </location>
    <ligand>
        <name>L-isoleucyl-5'-AMP</name>
        <dbReference type="ChEBI" id="CHEBI:178002"/>
    </ligand>
</feature>
<feature type="binding site" evidence="2">
    <location>
        <position position="554"/>
    </location>
    <ligand>
        <name>L-isoleucyl-5'-AMP</name>
        <dbReference type="ChEBI" id="CHEBI:178002"/>
    </ligand>
</feature>
<feature type="binding site" evidence="2">
    <location>
        <position position="555"/>
    </location>
    <ligand>
        <name>L-isoleucyl-5'-AMP</name>
        <dbReference type="ChEBI" id="CHEBI:178002"/>
    </ligand>
</feature>
<feature type="binding site" evidence="2">
    <location>
        <position position="557"/>
    </location>
    <ligand>
        <name>L-isoleucyl-5'-AMP</name>
        <dbReference type="ChEBI" id="CHEBI:178002"/>
    </ligand>
</feature>
<feature type="binding site" evidence="2">
    <location>
        <position position="558"/>
    </location>
    <ligand>
        <name>L-isoleucyl-5'-AMP</name>
        <dbReference type="ChEBI" id="CHEBI:178002"/>
    </ligand>
</feature>
<feature type="binding site" evidence="2">
    <location>
        <position position="585"/>
    </location>
    <ligand>
        <name>L-isoleucyl-5'-AMP</name>
        <dbReference type="ChEBI" id="CHEBI:178002"/>
    </ligand>
</feature>
<feature type="binding site" evidence="1">
    <location>
        <position position="598"/>
    </location>
    <ligand>
        <name>ATP</name>
        <dbReference type="ChEBI" id="CHEBI:30616"/>
    </ligand>
</feature>
<feature type="binding site" evidence="7">
    <location>
        <position position="632"/>
    </location>
    <ligand>
        <name>tRNA(Ile)</name>
        <dbReference type="ChEBI" id="CHEBI:29174"/>
    </ligand>
</feature>
<feature type="binding site" evidence="7">
    <location>
        <position position="640"/>
    </location>
    <ligand>
        <name>tRNA(Ile)</name>
        <dbReference type="ChEBI" id="CHEBI:29174"/>
    </ligand>
</feature>
<feature type="binding site" evidence="6 7">
    <location>
        <position position="886"/>
    </location>
    <ligand>
        <name>Zn(2+)</name>
        <dbReference type="ChEBI" id="CHEBI:29105"/>
    </ligand>
</feature>
<feature type="binding site" evidence="6 7">
    <location>
        <position position="889"/>
    </location>
    <ligand>
        <name>Zn(2+)</name>
        <dbReference type="ChEBI" id="CHEBI:29105"/>
    </ligand>
</feature>
<feature type="binding site" evidence="6 7">
    <location>
        <position position="906"/>
    </location>
    <ligand>
        <name>Zn(2+)</name>
        <dbReference type="ChEBI" id="CHEBI:29105"/>
    </ligand>
</feature>
<feature type="binding site" evidence="6 7">
    <location>
        <position position="909"/>
    </location>
    <ligand>
        <name>Zn(2+)</name>
        <dbReference type="ChEBI" id="CHEBI:29105"/>
    </ligand>
</feature>
<feature type="helix" evidence="9">
    <location>
        <begin position="4"/>
        <end position="6"/>
    </location>
</feature>
<feature type="helix" evidence="9">
    <location>
        <begin position="20"/>
        <end position="33"/>
    </location>
</feature>
<feature type="helix" evidence="9">
    <location>
        <begin position="36"/>
        <end position="43"/>
    </location>
</feature>
<feature type="turn" evidence="9">
    <location>
        <begin position="44"/>
        <end position="46"/>
    </location>
</feature>
<feature type="strand" evidence="9">
    <location>
        <begin position="58"/>
        <end position="61"/>
    </location>
</feature>
<feature type="helix" evidence="9">
    <location>
        <begin position="65"/>
        <end position="82"/>
    </location>
</feature>
<feature type="turn" evidence="9">
    <location>
        <begin position="83"/>
        <end position="85"/>
    </location>
</feature>
<feature type="strand" evidence="9">
    <location>
        <begin position="93"/>
        <end position="95"/>
    </location>
</feature>
<feature type="helix" evidence="9">
    <location>
        <begin position="99"/>
        <end position="108"/>
    </location>
</feature>
<feature type="helix" evidence="9">
    <location>
        <begin position="117"/>
        <end position="140"/>
    </location>
</feature>
<feature type="turn" evidence="9">
    <location>
        <begin position="141"/>
        <end position="143"/>
    </location>
</feature>
<feature type="helix" evidence="9">
    <location>
        <begin position="157"/>
        <end position="172"/>
    </location>
</feature>
<feature type="strand" evidence="9">
    <location>
        <begin position="176"/>
        <end position="186"/>
    </location>
</feature>
<feature type="turn" evidence="9">
    <location>
        <begin position="187"/>
        <end position="190"/>
    </location>
</feature>
<feature type="helix" evidence="9">
    <location>
        <begin position="195"/>
        <end position="197"/>
    </location>
</feature>
<feature type="strand" evidence="9">
    <location>
        <begin position="198"/>
        <end position="209"/>
    </location>
</feature>
<feature type="strand" evidence="10">
    <location>
        <begin position="212"/>
        <end position="214"/>
    </location>
</feature>
<feature type="helix" evidence="9">
    <location>
        <begin position="220"/>
        <end position="222"/>
    </location>
</feature>
<feature type="strand" evidence="9">
    <location>
        <begin position="230"/>
        <end position="232"/>
    </location>
</feature>
<feature type="helix" evidence="9">
    <location>
        <begin position="234"/>
        <end position="236"/>
    </location>
</feature>
<feature type="helix" evidence="10">
    <location>
        <begin position="237"/>
        <end position="239"/>
    </location>
</feature>
<feature type="strand" evidence="10">
    <location>
        <begin position="242"/>
        <end position="245"/>
    </location>
</feature>
<feature type="turn" evidence="9">
    <location>
        <begin position="256"/>
        <end position="259"/>
    </location>
</feature>
<feature type="turn" evidence="9">
    <location>
        <begin position="265"/>
        <end position="268"/>
    </location>
</feature>
<feature type="helix" evidence="9">
    <location>
        <begin position="269"/>
        <end position="272"/>
    </location>
</feature>
<feature type="turn" evidence="9">
    <location>
        <begin position="273"/>
        <end position="276"/>
    </location>
</feature>
<feature type="turn" evidence="9">
    <location>
        <begin position="290"/>
        <end position="292"/>
    </location>
</feature>
<feature type="helix" evidence="10">
    <location>
        <begin position="301"/>
        <end position="303"/>
    </location>
</feature>
<feature type="strand" evidence="10">
    <location>
        <begin position="306"/>
        <end position="312"/>
    </location>
</feature>
<feature type="strand" evidence="9">
    <location>
        <begin position="318"/>
        <end position="320"/>
    </location>
</feature>
<feature type="helix" evidence="9">
    <location>
        <begin position="333"/>
        <end position="336"/>
    </location>
</feature>
<feature type="turn" evidence="9">
    <location>
        <begin position="337"/>
        <end position="339"/>
    </location>
</feature>
<feature type="strand" evidence="9">
    <location>
        <begin position="340"/>
        <end position="342"/>
    </location>
</feature>
<feature type="strand" evidence="9">
    <location>
        <begin position="351"/>
        <end position="353"/>
    </location>
</feature>
<feature type="strand" evidence="9">
    <location>
        <begin position="363"/>
        <end position="365"/>
    </location>
</feature>
<feature type="helix" evidence="9">
    <location>
        <begin position="369"/>
        <end position="372"/>
    </location>
</feature>
<feature type="helix" evidence="9">
    <location>
        <begin position="375"/>
        <end position="377"/>
    </location>
</feature>
<feature type="helix" evidence="9">
    <location>
        <begin position="380"/>
        <end position="383"/>
    </location>
</feature>
<feature type="strand" evidence="9">
    <location>
        <begin position="388"/>
        <end position="397"/>
    </location>
</feature>
<feature type="turn" evidence="9">
    <location>
        <begin position="398"/>
        <end position="400"/>
    </location>
</feature>
<feature type="strand" evidence="9">
    <location>
        <begin position="405"/>
        <end position="414"/>
    </location>
</feature>
<feature type="helix" evidence="9">
    <location>
        <begin position="416"/>
        <end position="428"/>
    </location>
</feature>
<feature type="strand" evidence="9">
    <location>
        <begin position="430"/>
        <end position="434"/>
    </location>
</feature>
<feature type="helix" evidence="9">
    <location>
        <begin position="435"/>
        <end position="447"/>
    </location>
</feature>
<feature type="strand" evidence="9">
    <location>
        <begin position="454"/>
        <end position="456"/>
    </location>
</feature>
<feature type="strand" evidence="9">
    <location>
        <begin position="458"/>
        <end position="460"/>
    </location>
</feature>
<feature type="strand" evidence="10">
    <location>
        <begin position="469"/>
        <end position="471"/>
    </location>
</feature>
<feature type="helix" evidence="9">
    <location>
        <begin position="477"/>
        <end position="490"/>
    </location>
</feature>
<feature type="helix" evidence="9">
    <location>
        <begin position="493"/>
        <end position="497"/>
    </location>
</feature>
<feature type="helix" evidence="9">
    <location>
        <begin position="500"/>
        <end position="503"/>
    </location>
</feature>
<feature type="strand" evidence="10">
    <location>
        <begin position="504"/>
        <end position="507"/>
    </location>
</feature>
<feature type="strand" evidence="10">
    <location>
        <begin position="511"/>
        <end position="513"/>
    </location>
</feature>
<feature type="helix" evidence="9">
    <location>
        <begin position="527"/>
        <end position="532"/>
    </location>
</feature>
<feature type="helix" evidence="9">
    <location>
        <begin position="534"/>
        <end position="537"/>
    </location>
</feature>
<feature type="turn" evidence="9">
    <location>
        <begin position="538"/>
        <end position="541"/>
    </location>
</feature>
<feature type="strand" evidence="9">
    <location>
        <begin position="547"/>
        <end position="555"/>
    </location>
</feature>
<feature type="helix" evidence="9">
    <location>
        <begin position="556"/>
        <end position="559"/>
    </location>
</feature>
<feature type="helix" evidence="9">
    <location>
        <begin position="562"/>
        <end position="574"/>
    </location>
</feature>
<feature type="strand" evidence="9">
    <location>
        <begin position="578"/>
        <end position="585"/>
    </location>
</feature>
<feature type="strand" evidence="10">
    <location>
        <begin position="591"/>
        <end position="594"/>
    </location>
</feature>
<feature type="strand" evidence="9">
    <location>
        <begin position="598"/>
        <end position="601"/>
    </location>
</feature>
<feature type="helix" evidence="9">
    <location>
        <begin position="606"/>
        <end position="612"/>
    </location>
</feature>
<feature type="helix" evidence="9">
    <location>
        <begin position="615"/>
        <end position="623"/>
    </location>
</feature>
<feature type="helix" evidence="9">
    <location>
        <begin position="635"/>
        <end position="657"/>
    </location>
</feature>
<feature type="helix" evidence="9">
    <location>
        <begin position="664"/>
        <end position="667"/>
    </location>
</feature>
<feature type="helix" evidence="9">
    <location>
        <begin position="671"/>
        <end position="673"/>
    </location>
</feature>
<feature type="helix" evidence="9">
    <location>
        <begin position="676"/>
        <end position="697"/>
    </location>
</feature>
<feature type="helix" evidence="9">
    <location>
        <begin position="701"/>
        <end position="713"/>
    </location>
</feature>
<feature type="helix" evidence="9">
    <location>
        <begin position="714"/>
        <end position="719"/>
    </location>
</feature>
<feature type="helix" evidence="9">
    <location>
        <begin position="720"/>
        <end position="728"/>
    </location>
</feature>
<feature type="helix" evidence="9">
    <location>
        <begin position="736"/>
        <end position="756"/>
    </location>
</feature>
<feature type="turn" evidence="9">
    <location>
        <begin position="757"/>
        <end position="759"/>
    </location>
</feature>
<feature type="helix" evidence="9">
    <location>
        <begin position="761"/>
        <end position="768"/>
    </location>
</feature>
<feature type="strand" evidence="9">
    <location>
        <begin position="775"/>
        <end position="778"/>
    </location>
</feature>
<feature type="helix" evidence="9">
    <location>
        <begin position="779"/>
        <end position="781"/>
    </location>
</feature>
<feature type="helix" evidence="9">
    <location>
        <begin position="792"/>
        <end position="817"/>
    </location>
</feature>
<feature type="helix" evidence="9">
    <location>
        <begin position="824"/>
        <end position="826"/>
    </location>
</feature>
<feature type="strand" evidence="9">
    <location>
        <begin position="827"/>
        <end position="832"/>
    </location>
</feature>
<feature type="helix" evidence="9">
    <location>
        <begin position="839"/>
        <end position="842"/>
    </location>
</feature>
<feature type="helix" evidence="9">
    <location>
        <begin position="843"/>
        <end position="845"/>
    </location>
</feature>
<feature type="helix" evidence="9">
    <location>
        <begin position="849"/>
        <end position="852"/>
    </location>
</feature>
<feature type="strand" evidence="9">
    <location>
        <begin position="855"/>
        <end position="860"/>
    </location>
</feature>
<feature type="strand" evidence="9">
    <location>
        <begin position="868"/>
        <end position="871"/>
    </location>
</feature>
<feature type="strand" evidence="9">
    <location>
        <begin position="874"/>
        <end position="880"/>
    </location>
</feature>
<feature type="strand" evidence="9">
    <location>
        <begin position="882"/>
        <end position="885"/>
    </location>
</feature>
<feature type="turn" evidence="9">
    <location>
        <begin position="887"/>
        <end position="889"/>
    </location>
</feature>
<feature type="strand" evidence="9">
    <location>
        <begin position="892"/>
        <end position="894"/>
    </location>
</feature>
<feature type="strand" evidence="9">
    <location>
        <begin position="897"/>
        <end position="899"/>
    </location>
</feature>
<feature type="strand" evidence="9">
    <location>
        <begin position="902"/>
        <end position="905"/>
    </location>
</feature>
<feature type="helix" evidence="9">
    <location>
        <begin position="907"/>
        <end position="914"/>
    </location>
</feature>
<protein>
    <recommendedName>
        <fullName>Isoleucine--tRNA ligase</fullName>
        <ecNumber>6.1.1.5</ecNumber>
    </recommendedName>
    <alternativeName>
        <fullName>Isoleucyl-tRNA synthetase</fullName>
        <shortName>IleRS</shortName>
    </alternativeName>
</protein>
<keyword id="KW-0002">3D-structure</keyword>
<keyword id="KW-0030">Aminoacyl-tRNA synthetase</keyword>
<keyword id="KW-0067">ATP-binding</keyword>
<keyword id="KW-0963">Cytoplasm</keyword>
<keyword id="KW-0903">Direct protein sequencing</keyword>
<keyword id="KW-0436">Ligase</keyword>
<keyword id="KW-0479">Metal-binding</keyword>
<keyword id="KW-0547">Nucleotide-binding</keyword>
<keyword id="KW-0648">Protein biosynthesis</keyword>
<keyword id="KW-0862">Zinc</keyword>
<comment type="function">
    <text evidence="1">Catalyzes the attachment of isoleucine to tRNA(Ile). As IleRS can inadvertently accommodate and process structurally similar amino acids such as valine, to avoid such errors it has two additional distinct tRNA(Ile)-dependent editing activities. One activity is designated as 'pretransfer' editing and involves the hydrolysis of activated Val-AMP. The other activity is designated 'posttransfer' editing and involves deacylation of mischarged Val-tRNA(Ile) (By similarity).</text>
</comment>
<comment type="catalytic activity">
    <reaction>
        <text>tRNA(Ile) + L-isoleucine + ATP = L-isoleucyl-tRNA(Ile) + AMP + diphosphate</text>
        <dbReference type="Rhea" id="RHEA:11060"/>
        <dbReference type="Rhea" id="RHEA-COMP:9666"/>
        <dbReference type="Rhea" id="RHEA-COMP:9695"/>
        <dbReference type="ChEBI" id="CHEBI:30616"/>
        <dbReference type="ChEBI" id="CHEBI:33019"/>
        <dbReference type="ChEBI" id="CHEBI:58045"/>
        <dbReference type="ChEBI" id="CHEBI:78442"/>
        <dbReference type="ChEBI" id="CHEBI:78528"/>
        <dbReference type="ChEBI" id="CHEBI:456215"/>
        <dbReference type="EC" id="6.1.1.5"/>
    </reaction>
</comment>
<comment type="cofactor">
    <cofactor evidence="5">
        <name>Zn(2+)</name>
        <dbReference type="ChEBI" id="CHEBI:29105"/>
    </cofactor>
    <text evidence="3">Binds 1 zinc ion per subunit.</text>
</comment>
<comment type="subunit">
    <text evidence="3">Monomer.</text>
</comment>
<comment type="subcellular location">
    <subcellularLocation>
        <location>Cytoplasm</location>
    </subcellularLocation>
</comment>
<comment type="domain">
    <text evidence="1">IleRS has two distinct active sites: one for aminoacylation and one for editing. The misactivated valine is translocated from the active site to the editing site, which sterically excludes the correctly activated isoleucine. The single editing site contains two valyl binding pockets, one specific for each substrate (Val-AMP or Val-tRNA(Ile)) (By similarity).</text>
</comment>
<comment type="similarity">
    <text evidence="4">Belongs to the class-I aminoacyl-tRNA synthetase family. IleS type 1 subfamily.</text>
</comment>
<evidence type="ECO:0000250" key="1"/>
<evidence type="ECO:0000250" key="2">
    <source>
        <dbReference type="UniProtKB" id="P56690"/>
    </source>
</evidence>
<evidence type="ECO:0000269" key="3">
    <source>
    </source>
</evidence>
<evidence type="ECO:0000305" key="4"/>
<evidence type="ECO:0000305" key="5">
    <source>
    </source>
</evidence>
<evidence type="ECO:0007744" key="6">
    <source>
        <dbReference type="PDB" id="1FFY"/>
    </source>
</evidence>
<evidence type="ECO:0007744" key="7">
    <source>
        <dbReference type="PDB" id="1QU2"/>
    </source>
</evidence>
<evidence type="ECO:0007744" key="8">
    <source>
        <dbReference type="PDB" id="1QU3"/>
    </source>
</evidence>
<evidence type="ECO:0007829" key="9">
    <source>
        <dbReference type="PDB" id="1FFY"/>
    </source>
</evidence>
<evidence type="ECO:0007829" key="10">
    <source>
        <dbReference type="PDB" id="1QU3"/>
    </source>
</evidence>
<dbReference type="EC" id="6.1.1.5"/>
<dbReference type="EMBL" id="X74219">
    <property type="protein sequence ID" value="CAA52296.1"/>
    <property type="molecule type" value="Genomic_DNA"/>
</dbReference>
<dbReference type="PIR" id="S40178">
    <property type="entry name" value="S40178"/>
</dbReference>
<dbReference type="RefSeq" id="WP_000384706.1">
    <property type="nucleotide sequence ID" value="NZ_WKIW01000024.1"/>
</dbReference>
<dbReference type="PDB" id="1FFY">
    <property type="method" value="X-ray"/>
    <property type="resolution" value="2.20 A"/>
    <property type="chains" value="A=1-917"/>
</dbReference>
<dbReference type="PDB" id="1QU2">
    <property type="method" value="X-ray"/>
    <property type="resolution" value="2.20 A"/>
    <property type="chains" value="A=1-917"/>
</dbReference>
<dbReference type="PDB" id="1QU3">
    <property type="method" value="X-ray"/>
    <property type="resolution" value="2.90 A"/>
    <property type="chains" value="A=1-917"/>
</dbReference>
<dbReference type="PDBsum" id="1FFY"/>
<dbReference type="PDBsum" id="1QU2"/>
<dbReference type="PDBsum" id="1QU3"/>
<dbReference type="SMR" id="P41972"/>
<dbReference type="BindingDB" id="P41972"/>
<dbReference type="ChEMBL" id="CHEMBL1982"/>
<dbReference type="DrugBank" id="DB00410">
    <property type="generic name" value="Mupirocin"/>
</dbReference>
<dbReference type="DrugCentral" id="P41972"/>
<dbReference type="BRENDA" id="6.1.1.5">
    <property type="organism ID" value="3352"/>
</dbReference>
<dbReference type="SABIO-RK" id="P41972"/>
<dbReference type="EvolutionaryTrace" id="P41972"/>
<dbReference type="GO" id="GO:0005829">
    <property type="term" value="C:cytosol"/>
    <property type="evidence" value="ECO:0007669"/>
    <property type="project" value="TreeGrafter"/>
</dbReference>
<dbReference type="GO" id="GO:0002161">
    <property type="term" value="F:aminoacyl-tRNA deacylase activity"/>
    <property type="evidence" value="ECO:0007669"/>
    <property type="project" value="InterPro"/>
</dbReference>
<dbReference type="GO" id="GO:0005524">
    <property type="term" value="F:ATP binding"/>
    <property type="evidence" value="ECO:0007669"/>
    <property type="project" value="UniProtKB-UniRule"/>
</dbReference>
<dbReference type="GO" id="GO:0004822">
    <property type="term" value="F:isoleucine-tRNA ligase activity"/>
    <property type="evidence" value="ECO:0007669"/>
    <property type="project" value="UniProtKB-UniRule"/>
</dbReference>
<dbReference type="GO" id="GO:0000049">
    <property type="term" value="F:tRNA binding"/>
    <property type="evidence" value="ECO:0007669"/>
    <property type="project" value="InterPro"/>
</dbReference>
<dbReference type="GO" id="GO:0008270">
    <property type="term" value="F:zinc ion binding"/>
    <property type="evidence" value="ECO:0007669"/>
    <property type="project" value="UniProtKB-UniRule"/>
</dbReference>
<dbReference type="GO" id="GO:0006428">
    <property type="term" value="P:isoleucyl-tRNA aminoacylation"/>
    <property type="evidence" value="ECO:0007669"/>
    <property type="project" value="UniProtKB-UniRule"/>
</dbReference>
<dbReference type="CDD" id="cd07960">
    <property type="entry name" value="Anticodon_Ia_Ile_BEm"/>
    <property type="match status" value="1"/>
</dbReference>
<dbReference type="CDD" id="cd00818">
    <property type="entry name" value="IleRS_core"/>
    <property type="match status" value="1"/>
</dbReference>
<dbReference type="FunFam" id="1.10.10.830:FF:000001">
    <property type="entry name" value="Isoleucine--tRNA ligase"/>
    <property type="match status" value="1"/>
</dbReference>
<dbReference type="FunFam" id="1.10.730.20:FF:000001">
    <property type="entry name" value="Isoleucine--tRNA ligase"/>
    <property type="match status" value="1"/>
</dbReference>
<dbReference type="FunFam" id="3.40.50.620:FF:000152">
    <property type="entry name" value="Isoleucine--tRNA ligase"/>
    <property type="match status" value="1"/>
</dbReference>
<dbReference type="FunFam" id="3.90.740.10:FF:000006">
    <property type="entry name" value="Isoleucine--tRNA ligase"/>
    <property type="match status" value="1"/>
</dbReference>
<dbReference type="Gene3D" id="1.10.730.20">
    <property type="match status" value="1"/>
</dbReference>
<dbReference type="Gene3D" id="3.40.50.620">
    <property type="entry name" value="HUPs"/>
    <property type="match status" value="2"/>
</dbReference>
<dbReference type="Gene3D" id="1.10.10.830">
    <property type="entry name" value="Ile-tRNA synthetase CP2 domain-like"/>
    <property type="match status" value="1"/>
</dbReference>
<dbReference type="HAMAP" id="MF_02002">
    <property type="entry name" value="Ile_tRNA_synth_type1"/>
    <property type="match status" value="1"/>
</dbReference>
<dbReference type="InterPro" id="IPR001412">
    <property type="entry name" value="aa-tRNA-synth_I_CS"/>
</dbReference>
<dbReference type="InterPro" id="IPR002300">
    <property type="entry name" value="aa-tRNA-synth_Ia"/>
</dbReference>
<dbReference type="InterPro" id="IPR033708">
    <property type="entry name" value="Anticodon_Ile_BEm"/>
</dbReference>
<dbReference type="InterPro" id="IPR002301">
    <property type="entry name" value="Ile-tRNA-ligase"/>
</dbReference>
<dbReference type="InterPro" id="IPR023585">
    <property type="entry name" value="Ile-tRNA-ligase_type1"/>
</dbReference>
<dbReference type="InterPro" id="IPR050081">
    <property type="entry name" value="Ile-tRNA_ligase"/>
</dbReference>
<dbReference type="InterPro" id="IPR013155">
    <property type="entry name" value="M/V/L/I-tRNA-synth_anticd-bd"/>
</dbReference>
<dbReference type="InterPro" id="IPR014729">
    <property type="entry name" value="Rossmann-like_a/b/a_fold"/>
</dbReference>
<dbReference type="InterPro" id="IPR009080">
    <property type="entry name" value="tRNAsynth_Ia_anticodon-bd"/>
</dbReference>
<dbReference type="InterPro" id="IPR009008">
    <property type="entry name" value="Val/Leu/Ile-tRNA-synth_edit"/>
</dbReference>
<dbReference type="InterPro" id="IPR010663">
    <property type="entry name" value="Znf_FPG/IleRS"/>
</dbReference>
<dbReference type="NCBIfam" id="TIGR00392">
    <property type="entry name" value="ileS"/>
    <property type="match status" value="1"/>
</dbReference>
<dbReference type="PANTHER" id="PTHR42765:SF1">
    <property type="entry name" value="ISOLEUCINE--TRNA LIGASE, MITOCHONDRIAL"/>
    <property type="match status" value="1"/>
</dbReference>
<dbReference type="PANTHER" id="PTHR42765">
    <property type="entry name" value="SOLEUCYL-TRNA SYNTHETASE"/>
    <property type="match status" value="1"/>
</dbReference>
<dbReference type="Pfam" id="PF08264">
    <property type="entry name" value="Anticodon_1"/>
    <property type="match status" value="1"/>
</dbReference>
<dbReference type="Pfam" id="PF00133">
    <property type="entry name" value="tRNA-synt_1"/>
    <property type="match status" value="1"/>
</dbReference>
<dbReference type="Pfam" id="PF06827">
    <property type="entry name" value="zf-FPG_IleRS"/>
    <property type="match status" value="1"/>
</dbReference>
<dbReference type="PRINTS" id="PR00984">
    <property type="entry name" value="TRNASYNTHILE"/>
</dbReference>
<dbReference type="SUPFAM" id="SSF47323">
    <property type="entry name" value="Anticodon-binding domain of a subclass of class I aminoacyl-tRNA synthetases"/>
    <property type="match status" value="1"/>
</dbReference>
<dbReference type="SUPFAM" id="SSF52374">
    <property type="entry name" value="Nucleotidylyl transferase"/>
    <property type="match status" value="1"/>
</dbReference>
<dbReference type="SUPFAM" id="SSF50677">
    <property type="entry name" value="ValRS/IleRS/LeuRS editing domain"/>
    <property type="match status" value="1"/>
</dbReference>
<dbReference type="PROSITE" id="PS00178">
    <property type="entry name" value="AA_TRNA_LIGASE_I"/>
    <property type="match status" value="1"/>
</dbReference>